<protein>
    <recommendedName>
        <fullName evidence="1">Arginine repressor</fullName>
    </recommendedName>
</protein>
<feature type="chain" id="PRO_1000203716" description="Arginine repressor">
    <location>
        <begin position="1"/>
        <end position="149"/>
    </location>
</feature>
<accession>C4L3F0</accession>
<organism>
    <name type="scientific">Exiguobacterium sp. (strain ATCC BAA-1283 / AT1b)</name>
    <dbReference type="NCBI Taxonomy" id="360911"/>
    <lineage>
        <taxon>Bacteria</taxon>
        <taxon>Bacillati</taxon>
        <taxon>Bacillota</taxon>
        <taxon>Bacilli</taxon>
        <taxon>Bacillales</taxon>
        <taxon>Bacillales Family XII. Incertae Sedis</taxon>
        <taxon>Exiguobacterium</taxon>
    </lineage>
</organism>
<evidence type="ECO:0000255" key="1">
    <source>
        <dbReference type="HAMAP-Rule" id="MF_00173"/>
    </source>
</evidence>
<comment type="function">
    <text evidence="1">Regulates arginine biosynthesis genes.</text>
</comment>
<comment type="pathway">
    <text>Amino-acid biosynthesis; L-arginine biosynthesis [regulation].</text>
</comment>
<comment type="subcellular location">
    <subcellularLocation>
        <location evidence="1">Cytoplasm</location>
    </subcellularLocation>
</comment>
<comment type="similarity">
    <text evidence="1">Belongs to the ArgR family.</text>
</comment>
<proteinExistence type="inferred from homology"/>
<gene>
    <name evidence="1" type="primary">argR</name>
    <name type="ordered locus">EAT1b_0516</name>
</gene>
<keyword id="KW-0028">Amino-acid biosynthesis</keyword>
<keyword id="KW-0055">Arginine biosynthesis</keyword>
<keyword id="KW-0963">Cytoplasm</keyword>
<keyword id="KW-0238">DNA-binding</keyword>
<keyword id="KW-0678">Repressor</keyword>
<keyword id="KW-0804">Transcription</keyword>
<keyword id="KW-0805">Transcription regulation</keyword>
<dbReference type="EMBL" id="CP001615">
    <property type="protein sequence ID" value="ACQ69448.1"/>
    <property type="molecule type" value="Genomic_DNA"/>
</dbReference>
<dbReference type="RefSeq" id="WP_012726567.1">
    <property type="nucleotide sequence ID" value="NC_012673.1"/>
</dbReference>
<dbReference type="SMR" id="C4L3F0"/>
<dbReference type="STRING" id="360911.EAT1b_0516"/>
<dbReference type="GeneID" id="94371872"/>
<dbReference type="KEGG" id="eat:EAT1b_0516"/>
<dbReference type="eggNOG" id="COG1438">
    <property type="taxonomic scope" value="Bacteria"/>
</dbReference>
<dbReference type="HOGENOM" id="CLU_097103_3_0_9"/>
<dbReference type="OrthoDB" id="9807089at2"/>
<dbReference type="UniPathway" id="UPA00068"/>
<dbReference type="Proteomes" id="UP000000716">
    <property type="component" value="Chromosome"/>
</dbReference>
<dbReference type="GO" id="GO:0005737">
    <property type="term" value="C:cytoplasm"/>
    <property type="evidence" value="ECO:0007669"/>
    <property type="project" value="UniProtKB-SubCell"/>
</dbReference>
<dbReference type="GO" id="GO:0034618">
    <property type="term" value="F:arginine binding"/>
    <property type="evidence" value="ECO:0007669"/>
    <property type="project" value="InterPro"/>
</dbReference>
<dbReference type="GO" id="GO:0003677">
    <property type="term" value="F:DNA binding"/>
    <property type="evidence" value="ECO:0007669"/>
    <property type="project" value="UniProtKB-KW"/>
</dbReference>
<dbReference type="GO" id="GO:0003700">
    <property type="term" value="F:DNA-binding transcription factor activity"/>
    <property type="evidence" value="ECO:0007669"/>
    <property type="project" value="UniProtKB-UniRule"/>
</dbReference>
<dbReference type="GO" id="GO:0006526">
    <property type="term" value="P:L-arginine biosynthetic process"/>
    <property type="evidence" value="ECO:0007669"/>
    <property type="project" value="UniProtKB-UniPathway"/>
</dbReference>
<dbReference type="GO" id="GO:0051259">
    <property type="term" value="P:protein complex oligomerization"/>
    <property type="evidence" value="ECO:0007669"/>
    <property type="project" value="InterPro"/>
</dbReference>
<dbReference type="GO" id="GO:1900079">
    <property type="term" value="P:regulation of arginine biosynthetic process"/>
    <property type="evidence" value="ECO:0007669"/>
    <property type="project" value="UniProtKB-UniRule"/>
</dbReference>
<dbReference type="Gene3D" id="3.30.1360.40">
    <property type="match status" value="1"/>
</dbReference>
<dbReference type="Gene3D" id="1.10.10.10">
    <property type="entry name" value="Winged helix-like DNA-binding domain superfamily/Winged helix DNA-binding domain"/>
    <property type="match status" value="1"/>
</dbReference>
<dbReference type="HAMAP" id="MF_00173">
    <property type="entry name" value="Arg_repressor"/>
    <property type="match status" value="1"/>
</dbReference>
<dbReference type="InterPro" id="IPR001669">
    <property type="entry name" value="Arg_repress"/>
</dbReference>
<dbReference type="InterPro" id="IPR020899">
    <property type="entry name" value="Arg_repress_C"/>
</dbReference>
<dbReference type="InterPro" id="IPR036251">
    <property type="entry name" value="Arg_repress_C_sf"/>
</dbReference>
<dbReference type="InterPro" id="IPR020900">
    <property type="entry name" value="Arg_repress_DNA-bd"/>
</dbReference>
<dbReference type="InterPro" id="IPR036388">
    <property type="entry name" value="WH-like_DNA-bd_sf"/>
</dbReference>
<dbReference type="InterPro" id="IPR036390">
    <property type="entry name" value="WH_DNA-bd_sf"/>
</dbReference>
<dbReference type="NCBIfam" id="TIGR01529">
    <property type="entry name" value="argR_whole"/>
    <property type="match status" value="1"/>
</dbReference>
<dbReference type="NCBIfam" id="NF003281">
    <property type="entry name" value="PRK04280.1"/>
    <property type="match status" value="1"/>
</dbReference>
<dbReference type="PANTHER" id="PTHR34471">
    <property type="entry name" value="ARGININE REPRESSOR"/>
    <property type="match status" value="1"/>
</dbReference>
<dbReference type="PANTHER" id="PTHR34471:SF1">
    <property type="entry name" value="ARGININE REPRESSOR"/>
    <property type="match status" value="1"/>
</dbReference>
<dbReference type="Pfam" id="PF01316">
    <property type="entry name" value="Arg_repressor"/>
    <property type="match status" value="1"/>
</dbReference>
<dbReference type="Pfam" id="PF02863">
    <property type="entry name" value="Arg_repressor_C"/>
    <property type="match status" value="1"/>
</dbReference>
<dbReference type="PRINTS" id="PR01467">
    <property type="entry name" value="ARGREPRESSOR"/>
</dbReference>
<dbReference type="SUPFAM" id="SSF55252">
    <property type="entry name" value="C-terminal domain of arginine repressor"/>
    <property type="match status" value="1"/>
</dbReference>
<dbReference type="SUPFAM" id="SSF46785">
    <property type="entry name" value="Winged helix' DNA-binding domain"/>
    <property type="match status" value="1"/>
</dbReference>
<name>ARGR_EXISA</name>
<reference key="1">
    <citation type="journal article" date="2011" name="J. Bacteriol.">
        <title>Complete genome sequence of the Thermophilic Bacterium Exiguobacterium sp. AT1b.</title>
        <authorList>
            <person name="Vishnivetskaya T.A."/>
            <person name="Lucas S."/>
            <person name="Copeland A."/>
            <person name="Lapidus A."/>
            <person name="Glavina del Rio T."/>
            <person name="Dalin E."/>
            <person name="Tice H."/>
            <person name="Bruce D.C."/>
            <person name="Goodwin L.A."/>
            <person name="Pitluck S."/>
            <person name="Saunders E."/>
            <person name="Brettin T."/>
            <person name="Detter C."/>
            <person name="Han C."/>
            <person name="Larimer F."/>
            <person name="Land M.L."/>
            <person name="Hauser L.J."/>
            <person name="Kyrpides N.C."/>
            <person name="Ovchinnikova G."/>
            <person name="Kathariou S."/>
            <person name="Ramaley R.F."/>
            <person name="Rodrigues D.F."/>
            <person name="Hendrix C."/>
            <person name="Richardson P."/>
            <person name="Tiedje J.M."/>
        </authorList>
    </citation>
    <scope>NUCLEOTIDE SEQUENCE [LARGE SCALE GENOMIC DNA]</scope>
    <source>
        <strain>ATCC BAA-1283 / AT1b</strain>
    </source>
</reference>
<sequence>MNKGQRLIKIRDIVTNREIETQDELVDELRRSGYPVTQATVSRDIKELHLVKVPLNDGRYKYSLPADQRFNPYGKMKRILSDSFVSVDSAQNLVVMKVLPGNADAIGVLIDHLSWDELIGTVCGDDTILMIARDEEKAKQIIDRLLGML</sequence>